<evidence type="ECO:0000250" key="1"/>
<evidence type="ECO:0000250" key="2">
    <source>
        <dbReference type="UniProtKB" id="P01579"/>
    </source>
</evidence>
<evidence type="ECO:0000255" key="3"/>
<evidence type="ECO:0000269" key="4">
    <source>
    </source>
</evidence>
<evidence type="ECO:0000269" key="5">
    <source>
    </source>
</evidence>
<evidence type="ECO:0000269" key="6">
    <source>
    </source>
</evidence>
<evidence type="ECO:0000269" key="7">
    <source>
    </source>
</evidence>
<evidence type="ECO:0000305" key="8"/>
<proteinExistence type="evidence at protein level"/>
<feature type="signal peptide" evidence="3">
    <location>
        <begin position="1"/>
        <end position="22"/>
    </location>
</feature>
<feature type="chain" id="PRO_0000016453" description="Interferon gamma">
    <location>
        <begin position="23"/>
        <end position="155"/>
    </location>
</feature>
<feature type="glycosylation site" description="N-linked (GlcNAc...) asparagine" evidence="1">
    <location>
        <position position="38"/>
    </location>
</feature>
<feature type="glycosylation site" description="N-linked (GlcNAc...) asparagine" evidence="1">
    <location>
        <position position="90"/>
    </location>
</feature>
<organism>
    <name type="scientific">Mus musculus</name>
    <name type="common">Mouse</name>
    <dbReference type="NCBI Taxonomy" id="10090"/>
    <lineage>
        <taxon>Eukaryota</taxon>
        <taxon>Metazoa</taxon>
        <taxon>Chordata</taxon>
        <taxon>Craniata</taxon>
        <taxon>Vertebrata</taxon>
        <taxon>Euteleostomi</taxon>
        <taxon>Mammalia</taxon>
        <taxon>Eutheria</taxon>
        <taxon>Euarchontoglires</taxon>
        <taxon>Glires</taxon>
        <taxon>Rodentia</taxon>
        <taxon>Myomorpha</taxon>
        <taxon>Muroidea</taxon>
        <taxon>Muridae</taxon>
        <taxon>Murinae</taxon>
        <taxon>Mus</taxon>
        <taxon>Mus</taxon>
    </lineage>
</organism>
<keyword id="KW-0051">Antiviral defense</keyword>
<keyword id="KW-0202">Cytokine</keyword>
<keyword id="KW-0325">Glycoprotein</keyword>
<keyword id="KW-0341">Growth regulation</keyword>
<keyword id="KW-1185">Reference proteome</keyword>
<keyword id="KW-0964">Secreted</keyword>
<keyword id="KW-0732">Signal</keyword>
<accession>P01580</accession>
<accession>Q542B8</accession>
<sequence length="155" mass="17907">MNATHCILALQLFLMAVSGCYCHGTVIESLESLNNYFNSSGIDVEEKSLFLDIWRNWQKDGDMKILQSQIISFYLRLFEVLKDNQAISNNISVIESHLITTFFSNSKAKKDAFMSIAKFEVNNPQVQRQAFNELIRVVHQLLPESSLRKRKRSRC</sequence>
<name>IFNG_MOUSE</name>
<gene>
    <name type="primary">Ifng</name>
</gene>
<comment type="function">
    <text evidence="2 4 5 6 7">Type II interferon produced by immune cells such as T-cells and NK cells that plays crucial roles in antimicrobial, antiviral, and antitumor responses by activating effector immune cells and enhancing antigen presentation (PubMed:11585387, PubMed:8456301). Primarily signals through the JAK-STAT pathway after interaction with its receptor IFNGR1 to affect gene regulation. Upon IFNG binding, IFNGR1 intracellular domain opens out to allow association of downstream signaling components JAK2, JAK1 and STAT1, leading to STAT1 activation, nuclear translocation and transcription of IFNG-regulated genes. Many of the induced genes are transcription factors such as IRF1 that are able to further drive regulation of a next wave of transcription. Plays a role in class I antigen presentation pathway by inducing a replacement of catalytic proteasome subunits with immunoproteasome subunits. In turn, increases the quantity, quality, and repertoire of peptides for class I MHC loading. Increases the efficiency of peptide generation also by inducing the expression of activator PA28 that associates with the proteasome and alters its proteolytic cleavage preference. Up-regulates as well MHC II complexes on the cell surface by promoting expression of several key molecules such as cathepsins B/CTSB, H/CTSH, and L/CTSL (By similarity). Participates in the regulation of hematopoietic stem cells during development and under homeostatic conditions by affecting their development, quiescence, and differentiation (PubMed:20535209, PubMed:25078851).</text>
</comment>
<comment type="subunit">
    <text evidence="2">Homodimer. Interacts with IFNGR1 (via extracellular domain); this interaction promotes IFNGR1 dimerization.</text>
</comment>
<comment type="interaction">
    <interactant intactId="EBI-7892102">
        <id>P01580</id>
    </interactant>
    <interactant intactId="EBI-3043908">
        <id>P52293</id>
        <label>Kpna2</label>
    </interactant>
    <organismsDiffer>false</organismsDiffer>
    <experiments>5</experiments>
</comment>
<comment type="subcellular location">
    <subcellularLocation>
        <location evidence="2">Secreted</location>
    </subcellularLocation>
</comment>
<comment type="tissue specificity">
    <text>Released primarily from activated T lymphocytes.</text>
</comment>
<comment type="disruption phenotype">
    <text evidence="4 5 7">Deletion mutant mice show no special developmental defects, and their immune system appear to develop normally. However, they show susceptibility to bacterial or viral infections such as vaccinia virus or Theiler's murine encephalomyelitis virus, despite normal cytotoxic and T-helper cell responses.</text>
</comment>
<comment type="similarity">
    <text evidence="8">Belongs to the type II (or gamma) interferon family.</text>
</comment>
<dbReference type="EMBL" id="K00083">
    <property type="protein sequence ID" value="AAA37894.1"/>
    <property type="molecule type" value="mRNA"/>
</dbReference>
<dbReference type="EMBL" id="AK089574">
    <property type="protein sequence ID" value="BAC40926.1"/>
    <property type="molecule type" value="mRNA"/>
</dbReference>
<dbReference type="EMBL" id="BC119063">
    <property type="protein sequence ID" value="AAI19064.1"/>
    <property type="molecule type" value="mRNA"/>
</dbReference>
<dbReference type="EMBL" id="BC119065">
    <property type="protein sequence ID" value="AAI19066.1"/>
    <property type="molecule type" value="mRNA"/>
</dbReference>
<dbReference type="CCDS" id="CCDS24200.1"/>
<dbReference type="PIR" id="A01844">
    <property type="entry name" value="IVMSG"/>
</dbReference>
<dbReference type="RefSeq" id="NP_032363.1">
    <property type="nucleotide sequence ID" value="NM_008337.4"/>
</dbReference>
<dbReference type="SMR" id="P01580"/>
<dbReference type="FunCoup" id="P01580">
    <property type="interactions" value="737"/>
</dbReference>
<dbReference type="IntAct" id="P01580">
    <property type="interactions" value="3"/>
</dbReference>
<dbReference type="MINT" id="P01580"/>
<dbReference type="STRING" id="10090.ENSMUSP00000063800"/>
<dbReference type="GlyCosmos" id="P01580">
    <property type="glycosylation" value="2 sites, No reported glycans"/>
</dbReference>
<dbReference type="GlyGen" id="P01580">
    <property type="glycosylation" value="4 sites"/>
</dbReference>
<dbReference type="PhosphoSitePlus" id="P01580"/>
<dbReference type="PaxDb" id="10090-ENSMUSP00000063800"/>
<dbReference type="Antibodypedia" id="4154">
    <property type="antibodies" value="3520 antibodies from 51 providers"/>
</dbReference>
<dbReference type="DNASU" id="15978"/>
<dbReference type="Ensembl" id="ENSMUST00000068592.5">
    <property type="protein sequence ID" value="ENSMUSP00000063800.4"/>
    <property type="gene ID" value="ENSMUSG00000055170.5"/>
</dbReference>
<dbReference type="GeneID" id="15978"/>
<dbReference type="KEGG" id="mmu:15978"/>
<dbReference type="UCSC" id="uc007hdy.1">
    <property type="organism name" value="mouse"/>
</dbReference>
<dbReference type="AGR" id="MGI:107656"/>
<dbReference type="CTD" id="3458"/>
<dbReference type="MGI" id="MGI:107656">
    <property type="gene designation" value="Ifng"/>
</dbReference>
<dbReference type="VEuPathDB" id="HostDB:ENSMUSG00000055170"/>
<dbReference type="eggNOG" id="ENOG502SBGW">
    <property type="taxonomic scope" value="Eukaryota"/>
</dbReference>
<dbReference type="GeneTree" id="ENSGT00390000007831"/>
<dbReference type="HOGENOM" id="CLU_135106_0_0_1"/>
<dbReference type="InParanoid" id="P01580"/>
<dbReference type="OMA" id="CYCQAPF"/>
<dbReference type="OrthoDB" id="9937106at2759"/>
<dbReference type="PhylomeDB" id="P01580"/>
<dbReference type="TreeFam" id="TF336308"/>
<dbReference type="Reactome" id="R-MMU-877300">
    <property type="pathway name" value="Interferon gamma signaling"/>
</dbReference>
<dbReference type="Reactome" id="R-MMU-877312">
    <property type="pathway name" value="Regulation of IFNG signaling"/>
</dbReference>
<dbReference type="Reactome" id="R-MMU-9732724">
    <property type="pathway name" value="IFNG signaling activates MAPKs"/>
</dbReference>
<dbReference type="BioGRID-ORCS" id="15978">
    <property type="hits" value="2 hits in 114 CRISPR screens"/>
</dbReference>
<dbReference type="PRO" id="PR:P01580"/>
<dbReference type="Proteomes" id="UP000000589">
    <property type="component" value="Chromosome 10"/>
</dbReference>
<dbReference type="RNAct" id="P01580">
    <property type="molecule type" value="protein"/>
</dbReference>
<dbReference type="Bgee" id="ENSMUSG00000055170">
    <property type="expression patterns" value="Expressed in mesodermal cell in embryo and 11 other cell types or tissues"/>
</dbReference>
<dbReference type="GO" id="GO:0009897">
    <property type="term" value="C:external side of plasma membrane"/>
    <property type="evidence" value="ECO:0000314"/>
    <property type="project" value="MGI"/>
</dbReference>
<dbReference type="GO" id="GO:0005615">
    <property type="term" value="C:extracellular space"/>
    <property type="evidence" value="ECO:0000314"/>
    <property type="project" value="CAFA"/>
</dbReference>
<dbReference type="GO" id="GO:0005125">
    <property type="term" value="F:cytokine activity"/>
    <property type="evidence" value="ECO:0000314"/>
    <property type="project" value="ARUK-UCL"/>
</dbReference>
<dbReference type="GO" id="GO:0005133">
    <property type="term" value="F:type II interferon receptor binding"/>
    <property type="evidence" value="ECO:0007669"/>
    <property type="project" value="InterPro"/>
</dbReference>
<dbReference type="GO" id="GO:0002250">
    <property type="term" value="P:adaptive immune response"/>
    <property type="evidence" value="ECO:0000314"/>
    <property type="project" value="MGI"/>
</dbReference>
<dbReference type="GO" id="GO:0019882">
    <property type="term" value="P:antigen processing and presentation"/>
    <property type="evidence" value="ECO:0000314"/>
    <property type="project" value="MGI"/>
</dbReference>
<dbReference type="GO" id="GO:0006915">
    <property type="term" value="P:apoptotic process"/>
    <property type="evidence" value="ECO:0000266"/>
    <property type="project" value="MGI"/>
</dbReference>
<dbReference type="GO" id="GO:0048143">
    <property type="term" value="P:astrocyte activation"/>
    <property type="evidence" value="ECO:0000316"/>
    <property type="project" value="ARUK-UCL"/>
</dbReference>
<dbReference type="GO" id="GO:0002302">
    <property type="term" value="P:CD8-positive, alpha-beta T cell differentiation involved in immune response"/>
    <property type="evidence" value="ECO:0000314"/>
    <property type="project" value="MGI"/>
</dbReference>
<dbReference type="GO" id="GO:0007259">
    <property type="term" value="P:cell surface receptor signaling pathway via JAK-STAT"/>
    <property type="evidence" value="ECO:0000316"/>
    <property type="project" value="ARUK-UCL"/>
</dbReference>
<dbReference type="GO" id="GO:0071351">
    <property type="term" value="P:cellular response to interleukin-18"/>
    <property type="evidence" value="ECO:0000314"/>
    <property type="project" value="MGI"/>
</dbReference>
<dbReference type="GO" id="GO:0071222">
    <property type="term" value="P:cellular response to lipopolysaccharide"/>
    <property type="evidence" value="ECO:0000314"/>
    <property type="project" value="MGI"/>
</dbReference>
<dbReference type="GO" id="GO:0042742">
    <property type="term" value="P:defense response to bacterium"/>
    <property type="evidence" value="ECO:0000314"/>
    <property type="project" value="MGI"/>
</dbReference>
<dbReference type="GO" id="GO:0050830">
    <property type="term" value="P:defense response to Gram-positive bacterium"/>
    <property type="evidence" value="ECO:0000315"/>
    <property type="project" value="MGI"/>
</dbReference>
<dbReference type="GO" id="GO:0042832">
    <property type="term" value="P:defense response to protozoan"/>
    <property type="evidence" value="ECO:0000314"/>
    <property type="project" value="MGI"/>
</dbReference>
<dbReference type="GO" id="GO:0051607">
    <property type="term" value="P:defense response to virus"/>
    <property type="evidence" value="ECO:0000314"/>
    <property type="project" value="MGI"/>
</dbReference>
<dbReference type="GO" id="GO:0030968">
    <property type="term" value="P:endoplasmic reticulum unfolded protein response"/>
    <property type="evidence" value="ECO:0000314"/>
    <property type="project" value="MGI"/>
</dbReference>
<dbReference type="GO" id="GO:0006959">
    <property type="term" value="P:humoral immune response"/>
    <property type="evidence" value="ECO:0000314"/>
    <property type="project" value="MGI"/>
</dbReference>
<dbReference type="GO" id="GO:0006925">
    <property type="term" value="P:inflammatory cell apoptotic process"/>
    <property type="evidence" value="ECO:0000315"/>
    <property type="project" value="MGI"/>
</dbReference>
<dbReference type="GO" id="GO:0001774">
    <property type="term" value="P:microglial cell activation"/>
    <property type="evidence" value="ECO:0000316"/>
    <property type="project" value="ARUK-UCL"/>
</dbReference>
<dbReference type="GO" id="GO:1900222">
    <property type="term" value="P:negative regulation of amyloid-beta clearance"/>
    <property type="evidence" value="ECO:0000314"/>
    <property type="project" value="ARUK-UCL"/>
</dbReference>
<dbReference type="GO" id="GO:0045892">
    <property type="term" value="P:negative regulation of DNA-templated transcription"/>
    <property type="evidence" value="ECO:0000314"/>
    <property type="project" value="CAFA"/>
</dbReference>
<dbReference type="GO" id="GO:0010629">
    <property type="term" value="P:negative regulation of gene expression"/>
    <property type="evidence" value="ECO:0000314"/>
    <property type="project" value="ARUK-UCL"/>
</dbReference>
<dbReference type="GO" id="GO:0031642">
    <property type="term" value="P:negative regulation of myelination"/>
    <property type="evidence" value="ECO:0000314"/>
    <property type="project" value="MGI"/>
</dbReference>
<dbReference type="GO" id="GO:0045671">
    <property type="term" value="P:negative regulation of osteoclast differentiation"/>
    <property type="evidence" value="ECO:0000314"/>
    <property type="project" value="MGI"/>
</dbReference>
<dbReference type="GO" id="GO:0001781">
    <property type="term" value="P:neutrophil apoptotic process"/>
    <property type="evidence" value="ECO:0000315"/>
    <property type="project" value="MGI"/>
</dbReference>
<dbReference type="GO" id="GO:0030593">
    <property type="term" value="P:neutrophil chemotaxis"/>
    <property type="evidence" value="ECO:0000314"/>
    <property type="project" value="MGI"/>
</dbReference>
<dbReference type="GO" id="GO:0006809">
    <property type="term" value="P:nitric oxide biosynthetic process"/>
    <property type="evidence" value="ECO:0000314"/>
    <property type="project" value="MGI"/>
</dbReference>
<dbReference type="GO" id="GO:0044794">
    <property type="term" value="P:positive regulation by host of viral process"/>
    <property type="evidence" value="ECO:0000316"/>
    <property type="project" value="ARUK-UCL"/>
</dbReference>
<dbReference type="GO" id="GO:1902004">
    <property type="term" value="P:positive regulation of amyloid-beta formation"/>
    <property type="evidence" value="ECO:0000314"/>
    <property type="project" value="ARUK-UCL"/>
</dbReference>
<dbReference type="GO" id="GO:0010508">
    <property type="term" value="P:positive regulation of autophagy"/>
    <property type="evidence" value="ECO:0000250"/>
    <property type="project" value="UniProtKB"/>
</dbReference>
<dbReference type="GO" id="GO:1901857">
    <property type="term" value="P:positive regulation of cellular respiration"/>
    <property type="evidence" value="ECO:0000314"/>
    <property type="project" value="ARUK-UCL"/>
</dbReference>
<dbReference type="GO" id="GO:0032722">
    <property type="term" value="P:positive regulation of chemokine production"/>
    <property type="evidence" value="ECO:0000314"/>
    <property type="project" value="MGI"/>
</dbReference>
<dbReference type="GO" id="GO:0045893">
    <property type="term" value="P:positive regulation of DNA-templated transcription"/>
    <property type="evidence" value="ECO:0000314"/>
    <property type="project" value="MGI"/>
</dbReference>
<dbReference type="GO" id="GO:0010628">
    <property type="term" value="P:positive regulation of gene expression"/>
    <property type="evidence" value="ECO:0000314"/>
    <property type="project" value="ARUK-UCL"/>
</dbReference>
<dbReference type="GO" id="GO:0045821">
    <property type="term" value="P:positive regulation of glycolytic process"/>
    <property type="evidence" value="ECO:0000314"/>
    <property type="project" value="ARUK-UCL"/>
</dbReference>
<dbReference type="GO" id="GO:0032731">
    <property type="term" value="P:positive regulation of interleukin-1 beta production"/>
    <property type="evidence" value="ECO:0000314"/>
    <property type="project" value="ARUK-UCL"/>
</dbReference>
<dbReference type="GO" id="GO:0032735">
    <property type="term" value="P:positive regulation of interleukin-12 production"/>
    <property type="evidence" value="ECO:0000314"/>
    <property type="project" value="MGI"/>
</dbReference>
<dbReference type="GO" id="GO:0032755">
    <property type="term" value="P:positive regulation of interleukin-6 production"/>
    <property type="evidence" value="ECO:0000314"/>
    <property type="project" value="MGI"/>
</dbReference>
<dbReference type="GO" id="GO:1904440">
    <property type="term" value="P:positive regulation of iron ion import across plasma membrane"/>
    <property type="evidence" value="ECO:0000314"/>
    <property type="project" value="ARUK-UCL"/>
</dbReference>
<dbReference type="GO" id="GO:0048304">
    <property type="term" value="P:positive regulation of isotype switching to IgG isotypes"/>
    <property type="evidence" value="ECO:0000314"/>
    <property type="project" value="MGI"/>
</dbReference>
<dbReference type="GO" id="GO:0060907">
    <property type="term" value="P:positive regulation of macrophage cytokine production"/>
    <property type="evidence" value="ECO:0000314"/>
    <property type="project" value="MGI"/>
</dbReference>
<dbReference type="GO" id="GO:0045348">
    <property type="term" value="P:positive regulation of MHC class II biosynthetic process"/>
    <property type="evidence" value="ECO:0000314"/>
    <property type="project" value="BHF-UCL"/>
</dbReference>
<dbReference type="GO" id="GO:0045429">
    <property type="term" value="P:positive regulation of nitric oxide biosynthetic process"/>
    <property type="evidence" value="ECO:0000314"/>
    <property type="project" value="MGI"/>
</dbReference>
<dbReference type="GO" id="GO:0050766">
    <property type="term" value="P:positive regulation of phagocytosis"/>
    <property type="evidence" value="ECO:0000314"/>
    <property type="project" value="ARUK-UCL"/>
</dbReference>
<dbReference type="GO" id="GO:0090312">
    <property type="term" value="P:positive regulation of protein deacetylation"/>
    <property type="evidence" value="ECO:0000314"/>
    <property type="project" value="CAFA"/>
</dbReference>
<dbReference type="GO" id="GO:0042102">
    <property type="term" value="P:positive regulation of T cell proliferation"/>
    <property type="evidence" value="ECO:0000314"/>
    <property type="project" value="MGI"/>
</dbReference>
<dbReference type="GO" id="GO:0045944">
    <property type="term" value="P:positive regulation of transcription by RNA polymerase II"/>
    <property type="evidence" value="ECO:0000314"/>
    <property type="project" value="ARUK-UCL"/>
</dbReference>
<dbReference type="GO" id="GO:0032760">
    <property type="term" value="P:positive regulation of tumor necrosis factor production"/>
    <property type="evidence" value="ECO:0000314"/>
    <property type="project" value="BHF-UCL"/>
</dbReference>
<dbReference type="GO" id="GO:0050691">
    <property type="term" value="P:regulation of defense response to virus by host"/>
    <property type="evidence" value="ECO:0000314"/>
    <property type="project" value="CAFA"/>
</dbReference>
<dbReference type="GO" id="GO:0006355">
    <property type="term" value="P:regulation of DNA-templated transcription"/>
    <property type="evidence" value="ECO:0000314"/>
    <property type="project" value="MGI"/>
</dbReference>
<dbReference type="GO" id="GO:0050776">
    <property type="term" value="P:regulation of immune response"/>
    <property type="evidence" value="ECO:0000314"/>
    <property type="project" value="MGI"/>
</dbReference>
<dbReference type="GO" id="GO:0019222">
    <property type="term" value="P:regulation of metabolic process"/>
    <property type="evidence" value="ECO:0000316"/>
    <property type="project" value="ARUK-UCL"/>
</dbReference>
<dbReference type="GO" id="GO:0009615">
    <property type="term" value="P:response to virus"/>
    <property type="evidence" value="ECO:0000266"/>
    <property type="project" value="MGI"/>
</dbReference>
<dbReference type="GO" id="GO:0042098">
    <property type="term" value="P:T cell proliferation"/>
    <property type="evidence" value="ECO:0000314"/>
    <property type="project" value="MGI"/>
</dbReference>
<dbReference type="GO" id="GO:0050852">
    <property type="term" value="P:T cell receptor signaling pathway"/>
    <property type="evidence" value="ECO:0000314"/>
    <property type="project" value="MGI"/>
</dbReference>
<dbReference type="GO" id="GO:0060333">
    <property type="term" value="P:type II interferon-mediated signaling pathway"/>
    <property type="evidence" value="ECO:0000314"/>
    <property type="project" value="CAFA"/>
</dbReference>
<dbReference type="FunFam" id="1.20.1250.10:FF:000007">
    <property type="entry name" value="Interferon gamma"/>
    <property type="match status" value="1"/>
</dbReference>
<dbReference type="Gene3D" id="1.20.1250.10">
    <property type="match status" value="1"/>
</dbReference>
<dbReference type="InterPro" id="IPR009079">
    <property type="entry name" value="4_helix_cytokine-like_core"/>
</dbReference>
<dbReference type="InterPro" id="IPR002069">
    <property type="entry name" value="Interferon_gamma"/>
</dbReference>
<dbReference type="PANTHER" id="PTHR11419">
    <property type="entry name" value="INTERFERON GAMMA"/>
    <property type="match status" value="1"/>
</dbReference>
<dbReference type="PANTHER" id="PTHR11419:SF0">
    <property type="entry name" value="INTERFERON GAMMA"/>
    <property type="match status" value="1"/>
</dbReference>
<dbReference type="Pfam" id="PF00714">
    <property type="entry name" value="IFN-gamma"/>
    <property type="match status" value="1"/>
</dbReference>
<dbReference type="PIRSF" id="PIRSF001936">
    <property type="entry name" value="IFN-gamma"/>
    <property type="match status" value="1"/>
</dbReference>
<dbReference type="SUPFAM" id="SSF47266">
    <property type="entry name" value="4-helical cytokines"/>
    <property type="match status" value="1"/>
</dbReference>
<reference key="1">
    <citation type="journal article" date="1983" name="Proc. Natl. Acad. Sci. U.S.A.">
        <title>Cloning and expression of murine immune interferon cDNA.</title>
        <authorList>
            <person name="Gray P.W."/>
            <person name="Goeddel D.V."/>
        </authorList>
    </citation>
    <scope>NUCLEOTIDE SEQUENCE [MRNA]</scope>
</reference>
<reference key="2">
    <citation type="journal article" date="2005" name="Science">
        <title>The transcriptional landscape of the mammalian genome.</title>
        <authorList>
            <person name="Carninci P."/>
            <person name="Kasukawa T."/>
            <person name="Katayama S."/>
            <person name="Gough J."/>
            <person name="Frith M.C."/>
            <person name="Maeda N."/>
            <person name="Oyama R."/>
            <person name="Ravasi T."/>
            <person name="Lenhard B."/>
            <person name="Wells C."/>
            <person name="Kodzius R."/>
            <person name="Shimokawa K."/>
            <person name="Bajic V.B."/>
            <person name="Brenner S.E."/>
            <person name="Batalov S."/>
            <person name="Forrest A.R."/>
            <person name="Zavolan M."/>
            <person name="Davis M.J."/>
            <person name="Wilming L.G."/>
            <person name="Aidinis V."/>
            <person name="Allen J.E."/>
            <person name="Ambesi-Impiombato A."/>
            <person name="Apweiler R."/>
            <person name="Aturaliya R.N."/>
            <person name="Bailey T.L."/>
            <person name="Bansal M."/>
            <person name="Baxter L."/>
            <person name="Beisel K.W."/>
            <person name="Bersano T."/>
            <person name="Bono H."/>
            <person name="Chalk A.M."/>
            <person name="Chiu K.P."/>
            <person name="Choudhary V."/>
            <person name="Christoffels A."/>
            <person name="Clutterbuck D.R."/>
            <person name="Crowe M.L."/>
            <person name="Dalla E."/>
            <person name="Dalrymple B.P."/>
            <person name="de Bono B."/>
            <person name="Della Gatta G."/>
            <person name="di Bernardo D."/>
            <person name="Down T."/>
            <person name="Engstrom P."/>
            <person name="Fagiolini M."/>
            <person name="Faulkner G."/>
            <person name="Fletcher C.F."/>
            <person name="Fukushima T."/>
            <person name="Furuno M."/>
            <person name="Futaki S."/>
            <person name="Gariboldi M."/>
            <person name="Georgii-Hemming P."/>
            <person name="Gingeras T.R."/>
            <person name="Gojobori T."/>
            <person name="Green R.E."/>
            <person name="Gustincich S."/>
            <person name="Harbers M."/>
            <person name="Hayashi Y."/>
            <person name="Hensch T.K."/>
            <person name="Hirokawa N."/>
            <person name="Hill D."/>
            <person name="Huminiecki L."/>
            <person name="Iacono M."/>
            <person name="Ikeo K."/>
            <person name="Iwama A."/>
            <person name="Ishikawa T."/>
            <person name="Jakt M."/>
            <person name="Kanapin A."/>
            <person name="Katoh M."/>
            <person name="Kawasawa Y."/>
            <person name="Kelso J."/>
            <person name="Kitamura H."/>
            <person name="Kitano H."/>
            <person name="Kollias G."/>
            <person name="Krishnan S.P."/>
            <person name="Kruger A."/>
            <person name="Kummerfeld S.K."/>
            <person name="Kurochkin I.V."/>
            <person name="Lareau L.F."/>
            <person name="Lazarevic D."/>
            <person name="Lipovich L."/>
            <person name="Liu J."/>
            <person name="Liuni S."/>
            <person name="McWilliam S."/>
            <person name="Madan Babu M."/>
            <person name="Madera M."/>
            <person name="Marchionni L."/>
            <person name="Matsuda H."/>
            <person name="Matsuzawa S."/>
            <person name="Miki H."/>
            <person name="Mignone F."/>
            <person name="Miyake S."/>
            <person name="Morris K."/>
            <person name="Mottagui-Tabar S."/>
            <person name="Mulder N."/>
            <person name="Nakano N."/>
            <person name="Nakauchi H."/>
            <person name="Ng P."/>
            <person name="Nilsson R."/>
            <person name="Nishiguchi S."/>
            <person name="Nishikawa S."/>
            <person name="Nori F."/>
            <person name="Ohara O."/>
            <person name="Okazaki Y."/>
            <person name="Orlando V."/>
            <person name="Pang K.C."/>
            <person name="Pavan W.J."/>
            <person name="Pavesi G."/>
            <person name="Pesole G."/>
            <person name="Petrovsky N."/>
            <person name="Piazza S."/>
            <person name="Reed J."/>
            <person name="Reid J.F."/>
            <person name="Ring B.Z."/>
            <person name="Ringwald M."/>
            <person name="Rost B."/>
            <person name="Ruan Y."/>
            <person name="Salzberg S.L."/>
            <person name="Sandelin A."/>
            <person name="Schneider C."/>
            <person name="Schoenbach C."/>
            <person name="Sekiguchi K."/>
            <person name="Semple C.A."/>
            <person name="Seno S."/>
            <person name="Sessa L."/>
            <person name="Sheng Y."/>
            <person name="Shibata Y."/>
            <person name="Shimada H."/>
            <person name="Shimada K."/>
            <person name="Silva D."/>
            <person name="Sinclair B."/>
            <person name="Sperling S."/>
            <person name="Stupka E."/>
            <person name="Sugiura K."/>
            <person name="Sultana R."/>
            <person name="Takenaka Y."/>
            <person name="Taki K."/>
            <person name="Tammoja K."/>
            <person name="Tan S.L."/>
            <person name="Tang S."/>
            <person name="Taylor M.S."/>
            <person name="Tegner J."/>
            <person name="Teichmann S.A."/>
            <person name="Ueda H.R."/>
            <person name="van Nimwegen E."/>
            <person name="Verardo R."/>
            <person name="Wei C.L."/>
            <person name="Yagi K."/>
            <person name="Yamanishi H."/>
            <person name="Zabarovsky E."/>
            <person name="Zhu S."/>
            <person name="Zimmer A."/>
            <person name="Hide W."/>
            <person name="Bult C."/>
            <person name="Grimmond S.M."/>
            <person name="Teasdale R.D."/>
            <person name="Liu E.T."/>
            <person name="Brusic V."/>
            <person name="Quackenbush J."/>
            <person name="Wahlestedt C."/>
            <person name="Mattick J.S."/>
            <person name="Hume D.A."/>
            <person name="Kai C."/>
            <person name="Sasaki D."/>
            <person name="Tomaru Y."/>
            <person name="Fukuda S."/>
            <person name="Kanamori-Katayama M."/>
            <person name="Suzuki M."/>
            <person name="Aoki J."/>
            <person name="Arakawa T."/>
            <person name="Iida J."/>
            <person name="Imamura K."/>
            <person name="Itoh M."/>
            <person name="Kato T."/>
            <person name="Kawaji H."/>
            <person name="Kawagashira N."/>
            <person name="Kawashima T."/>
            <person name="Kojima M."/>
            <person name="Kondo S."/>
            <person name="Konno H."/>
            <person name="Nakano K."/>
            <person name="Ninomiya N."/>
            <person name="Nishio T."/>
            <person name="Okada M."/>
            <person name="Plessy C."/>
            <person name="Shibata K."/>
            <person name="Shiraki T."/>
            <person name="Suzuki S."/>
            <person name="Tagami M."/>
            <person name="Waki K."/>
            <person name="Watahiki A."/>
            <person name="Okamura-Oho Y."/>
            <person name="Suzuki H."/>
            <person name="Kawai J."/>
            <person name="Hayashizaki Y."/>
        </authorList>
    </citation>
    <scope>NUCLEOTIDE SEQUENCE [LARGE SCALE MRNA]</scope>
    <source>
        <strain>NOD</strain>
        <tissue>Spleen</tissue>
    </source>
</reference>
<reference key="3">
    <citation type="journal article" date="2004" name="Genome Res.">
        <title>The status, quality, and expansion of the NIH full-length cDNA project: the Mammalian Gene Collection (MGC).</title>
        <authorList>
            <consortium name="The MGC Project Team"/>
        </authorList>
    </citation>
    <scope>NUCLEOTIDE SEQUENCE [LARGE SCALE MRNA]</scope>
    <source>
        <tissue>Brain</tissue>
    </source>
</reference>
<reference key="4">
    <citation type="journal article" date="1993" name="Science">
        <title>Immune response in mice that lack the interferon-gamma receptor.</title>
        <authorList>
            <person name="Huang S."/>
            <person name="Hendriks W."/>
            <person name="Althage A."/>
            <person name="Hemmi S."/>
            <person name="Bluethmann H."/>
            <person name="Kamijo R."/>
            <person name="Vilcek J."/>
            <person name="Zinkernagel R.M."/>
            <person name="Aguet M."/>
        </authorList>
    </citation>
    <scope>DISRUPTION PHENOTYPE</scope>
    <scope>FUNCTION</scope>
</reference>
<reference key="5">
    <citation type="journal article" date="2001" name="Cell. Immunol.">
        <title>Inflammation and lymphocyte activation during mycobacterial infection in the interferon-gamma-deficient mouse.</title>
        <authorList>
            <person name="Pearl J.E."/>
            <person name="Saunders B."/>
            <person name="Ehlers S."/>
            <person name="Orme I.M."/>
            <person name="Cooper A.M."/>
        </authorList>
    </citation>
    <scope>FUNCTION</scope>
    <scope>DISRUPTION PHENOTYPE</scope>
</reference>
<reference key="6">
    <citation type="journal article" date="2010" name="Nature">
        <title>Quiescent haematopoietic stem cells are activated by IFN-gamma in response to chronic infection.</title>
        <authorList>
            <person name="Baldridge M.T."/>
            <person name="King K.Y."/>
            <person name="Boles N.C."/>
            <person name="Weksberg D.C."/>
            <person name="Goodell M.A."/>
        </authorList>
    </citation>
    <scope>FUNCTION</scope>
    <scope>DISRUPTION PHENOTYPE</scope>
</reference>
<reference key="7">
    <citation type="journal article" date="2014" name="Stem Cells">
        <title>Type II interferon promotes differentiation of myeloid-biased hematopoietic stem cells.</title>
        <authorList>
            <person name="Matatall K.A."/>
            <person name="Shen C.C."/>
            <person name="Challen G.A."/>
            <person name="King K.Y."/>
        </authorList>
    </citation>
    <scope>FUNCTION</scope>
</reference>
<protein>
    <recommendedName>
        <fullName>Interferon gamma</fullName>
        <shortName>IFN-gamma</shortName>
    </recommendedName>
</protein>